<keyword id="KW-0010">Activator</keyword>
<keyword id="KW-1185">Reference proteome</keyword>
<keyword id="KW-0804">Transcription</keyword>
<keyword id="KW-0805">Transcription regulation</keyword>
<evidence type="ECO:0000269" key="1">
    <source>
    </source>
</evidence>
<evidence type="ECO:0000269" key="2">
    <source>
    </source>
</evidence>
<comment type="function">
    <text evidence="1 2">Together with RNA polymerase sigma factor SigO, positively regulates the expression of at least three operons, including oxdC-yvrL, sigO-rsoA and yvrJ. Required for the acid stress-dependent induction of the oxalate decarboxylase oxdC.</text>
</comment>
<comment type="interaction">
    <interactant intactId="EBI-15816929">
        <id>C0H3R4</id>
    </interactant>
    <interactant intactId="EBI-5244361">
        <id>P37871</id>
        <label>rpoC</label>
    </interactant>
    <organismsDiffer>false</organismsDiffer>
    <experiments>3</experiments>
</comment>
<comment type="interaction">
    <interactant intactId="EBI-15816929">
        <id>C0H3R4</id>
    </interactant>
    <interactant intactId="EBI-15816883">
        <id>O34843</id>
        <label>sigO</label>
    </interactant>
    <organismsDiffer>false</organismsDiffer>
    <experiments>2</experiments>
</comment>
<comment type="induction">
    <text evidence="1">Positively regulated by SigO.</text>
</comment>
<protein>
    <recommendedName>
        <fullName>Sigma-O factor regulatory protein RsoA</fullName>
    </recommendedName>
</protein>
<reference key="1">
    <citation type="journal article" date="1997" name="Nature">
        <title>The complete genome sequence of the Gram-positive bacterium Bacillus subtilis.</title>
        <authorList>
            <person name="Kunst F."/>
            <person name="Ogasawara N."/>
            <person name="Moszer I."/>
            <person name="Albertini A.M."/>
            <person name="Alloni G."/>
            <person name="Azevedo V."/>
            <person name="Bertero M.G."/>
            <person name="Bessieres P."/>
            <person name="Bolotin A."/>
            <person name="Borchert S."/>
            <person name="Borriss R."/>
            <person name="Boursier L."/>
            <person name="Brans A."/>
            <person name="Braun M."/>
            <person name="Brignell S.C."/>
            <person name="Bron S."/>
            <person name="Brouillet S."/>
            <person name="Bruschi C.V."/>
            <person name="Caldwell B."/>
            <person name="Capuano V."/>
            <person name="Carter N.M."/>
            <person name="Choi S.-K."/>
            <person name="Codani J.-J."/>
            <person name="Connerton I.F."/>
            <person name="Cummings N.J."/>
            <person name="Daniel R.A."/>
            <person name="Denizot F."/>
            <person name="Devine K.M."/>
            <person name="Duesterhoeft A."/>
            <person name="Ehrlich S.D."/>
            <person name="Emmerson P.T."/>
            <person name="Entian K.-D."/>
            <person name="Errington J."/>
            <person name="Fabret C."/>
            <person name="Ferrari E."/>
            <person name="Foulger D."/>
            <person name="Fritz C."/>
            <person name="Fujita M."/>
            <person name="Fujita Y."/>
            <person name="Fuma S."/>
            <person name="Galizzi A."/>
            <person name="Galleron N."/>
            <person name="Ghim S.-Y."/>
            <person name="Glaser P."/>
            <person name="Goffeau A."/>
            <person name="Golightly E.J."/>
            <person name="Grandi G."/>
            <person name="Guiseppi G."/>
            <person name="Guy B.J."/>
            <person name="Haga K."/>
            <person name="Haiech J."/>
            <person name="Harwood C.R."/>
            <person name="Henaut A."/>
            <person name="Hilbert H."/>
            <person name="Holsappel S."/>
            <person name="Hosono S."/>
            <person name="Hullo M.-F."/>
            <person name="Itaya M."/>
            <person name="Jones L.-M."/>
            <person name="Joris B."/>
            <person name="Karamata D."/>
            <person name="Kasahara Y."/>
            <person name="Klaerr-Blanchard M."/>
            <person name="Klein C."/>
            <person name="Kobayashi Y."/>
            <person name="Koetter P."/>
            <person name="Koningstein G."/>
            <person name="Krogh S."/>
            <person name="Kumano M."/>
            <person name="Kurita K."/>
            <person name="Lapidus A."/>
            <person name="Lardinois S."/>
            <person name="Lauber J."/>
            <person name="Lazarevic V."/>
            <person name="Lee S.-M."/>
            <person name="Levine A."/>
            <person name="Liu H."/>
            <person name="Masuda S."/>
            <person name="Mauel C."/>
            <person name="Medigue C."/>
            <person name="Medina N."/>
            <person name="Mellado R.P."/>
            <person name="Mizuno M."/>
            <person name="Moestl D."/>
            <person name="Nakai S."/>
            <person name="Noback M."/>
            <person name="Noone D."/>
            <person name="O'Reilly M."/>
            <person name="Ogawa K."/>
            <person name="Ogiwara A."/>
            <person name="Oudega B."/>
            <person name="Park S.-H."/>
            <person name="Parro V."/>
            <person name="Pohl T.M."/>
            <person name="Portetelle D."/>
            <person name="Porwollik S."/>
            <person name="Prescott A.M."/>
            <person name="Presecan E."/>
            <person name="Pujic P."/>
            <person name="Purnelle B."/>
            <person name="Rapoport G."/>
            <person name="Rey M."/>
            <person name="Reynolds S."/>
            <person name="Rieger M."/>
            <person name="Rivolta C."/>
            <person name="Rocha E."/>
            <person name="Roche B."/>
            <person name="Rose M."/>
            <person name="Sadaie Y."/>
            <person name="Sato T."/>
            <person name="Scanlan E."/>
            <person name="Schleich S."/>
            <person name="Schroeter R."/>
            <person name="Scoffone F."/>
            <person name="Sekiguchi J."/>
            <person name="Sekowska A."/>
            <person name="Seror S.J."/>
            <person name="Serror P."/>
            <person name="Shin B.-S."/>
            <person name="Soldo B."/>
            <person name="Sorokin A."/>
            <person name="Tacconi E."/>
            <person name="Takagi T."/>
            <person name="Takahashi H."/>
            <person name="Takemaru K."/>
            <person name="Takeuchi M."/>
            <person name="Tamakoshi A."/>
            <person name="Tanaka T."/>
            <person name="Terpstra P."/>
            <person name="Tognoni A."/>
            <person name="Tosato V."/>
            <person name="Uchiyama S."/>
            <person name="Vandenbol M."/>
            <person name="Vannier F."/>
            <person name="Vassarotti A."/>
            <person name="Viari A."/>
            <person name="Wambutt R."/>
            <person name="Wedler E."/>
            <person name="Wedler H."/>
            <person name="Weitzenegger T."/>
            <person name="Winters P."/>
            <person name="Wipat A."/>
            <person name="Yamamoto H."/>
            <person name="Yamane K."/>
            <person name="Yasumoto K."/>
            <person name="Yata K."/>
            <person name="Yoshida K."/>
            <person name="Yoshikawa H.-F."/>
            <person name="Zumstein E."/>
            <person name="Yoshikawa H."/>
            <person name="Danchin A."/>
        </authorList>
    </citation>
    <scope>NUCLEOTIDE SEQUENCE [LARGE SCALE GENOMIC DNA]</scope>
    <source>
        <strain>168</strain>
    </source>
</reference>
<reference key="2">
    <citation type="journal article" date="2008" name="Mol. Microbiol.">
        <title>A previously unidentified sigma factor and two accessory proteins regulate oxalate decarboxylase expression in Bacillus subtilis.</title>
        <authorList>
            <person name="MacLellan S.R."/>
            <person name="Wecke T."/>
            <person name="Helmann J.D."/>
        </authorList>
    </citation>
    <scope>FUNCTION AS A SIGO ACCESSORY PROTEIN</scope>
    <scope>INDUCTION</scope>
    <source>
        <strain>168 / CU1065</strain>
    </source>
</reference>
<reference key="3">
    <citation type="journal article" date="2009" name="J. Bacteriol.">
        <title>The yvrI alternative sigma factor is essential for acid stress induction of oxalate decarboxylase in Bacillus subtilis.</title>
        <authorList>
            <person name="MacLellan S.R."/>
            <person name="Helmann J.D."/>
            <person name="Antelmann H."/>
        </authorList>
    </citation>
    <scope>FUNCTION IN OXDC INDUCTION</scope>
    <source>
        <strain>168 / CU1065</strain>
    </source>
</reference>
<sequence length="79" mass="9546">MDGQFEQKKKQKDETYDIEHLIACFSPMIRKKLSNTSYQEREDLEQELKIKMFEKADMLLCQDVPGFWEFILYMVDENS</sequence>
<proteinExistence type="evidence at protein level"/>
<feature type="chain" id="PRO_0000378488" description="Sigma-O factor regulatory protein RsoA">
    <location>
        <begin position="1"/>
        <end position="79"/>
    </location>
</feature>
<gene>
    <name type="primary">rsoA</name>
    <name type="synonym">yvrHa</name>
    <name type="ordered locus">BSU33222</name>
</gene>
<organism>
    <name type="scientific">Bacillus subtilis (strain 168)</name>
    <dbReference type="NCBI Taxonomy" id="224308"/>
    <lineage>
        <taxon>Bacteria</taxon>
        <taxon>Bacillati</taxon>
        <taxon>Bacillota</taxon>
        <taxon>Bacilli</taxon>
        <taxon>Bacillales</taxon>
        <taxon>Bacillaceae</taxon>
        <taxon>Bacillus</taxon>
    </lineage>
</organism>
<name>RSOA_BACSU</name>
<dbReference type="EMBL" id="AL009126">
    <property type="protein sequence ID" value="CAX52693.1"/>
    <property type="molecule type" value="Genomic_DNA"/>
</dbReference>
<dbReference type="RefSeq" id="WP_003228484.1">
    <property type="nucleotide sequence ID" value="NZ_OZ025638.1"/>
</dbReference>
<dbReference type="RefSeq" id="YP_003097787.1">
    <property type="nucleotide sequence ID" value="NC_000964.3"/>
</dbReference>
<dbReference type="SMR" id="C0H3R4"/>
<dbReference type="DIP" id="DIP-49020N"/>
<dbReference type="FunCoup" id="C0H3R4">
    <property type="interactions" value="2"/>
</dbReference>
<dbReference type="IntAct" id="C0H3R4">
    <property type="interactions" value="2"/>
</dbReference>
<dbReference type="STRING" id="224308.BSU33222"/>
<dbReference type="PaxDb" id="224308-BSU33222"/>
<dbReference type="EnsemblBacteria" id="CAX52693">
    <property type="protein sequence ID" value="CAX52693"/>
    <property type="gene ID" value="BSU_33222"/>
</dbReference>
<dbReference type="GeneID" id="8302938"/>
<dbReference type="KEGG" id="bsu:BSU33222"/>
<dbReference type="PATRIC" id="fig|224308.179.peg.3604"/>
<dbReference type="InParanoid" id="C0H3R4"/>
<dbReference type="OrthoDB" id="2658921at2"/>
<dbReference type="BioCyc" id="BSUB:BSU33222-MONOMER"/>
<dbReference type="Proteomes" id="UP000001570">
    <property type="component" value="Chromosome"/>
</dbReference>
<dbReference type="InterPro" id="IPR048216">
    <property type="entry name" value="RsoA-like"/>
</dbReference>
<dbReference type="NCBIfam" id="NF010682">
    <property type="entry name" value="PRK14082.1"/>
    <property type="match status" value="1"/>
</dbReference>
<dbReference type="NCBIfam" id="NF041489">
    <property type="entry name" value="sigO_reg_RsoA"/>
    <property type="match status" value="1"/>
</dbReference>
<accession>C0H3R4</accession>